<protein>
    <recommendedName>
        <fullName evidence="1">Transcription elongation factor GreA</fullName>
    </recommendedName>
    <alternativeName>
        <fullName evidence="1">Transcript cleavage factor GreA</fullName>
    </alternativeName>
</protein>
<name>GREA_YERPG</name>
<evidence type="ECO:0000255" key="1">
    <source>
        <dbReference type="HAMAP-Rule" id="MF_00105"/>
    </source>
</evidence>
<dbReference type="EMBL" id="CP000901">
    <property type="protein sequence ID" value="ABX88510.1"/>
    <property type="molecule type" value="Genomic_DNA"/>
</dbReference>
<dbReference type="RefSeq" id="WP_002210184.1">
    <property type="nucleotide sequence ID" value="NZ_CP009935.1"/>
</dbReference>
<dbReference type="SMR" id="A9R594"/>
<dbReference type="GeneID" id="57975209"/>
<dbReference type="KEGG" id="ypg:YpAngola_A3982"/>
<dbReference type="PATRIC" id="fig|349746.12.peg.708"/>
<dbReference type="GO" id="GO:0003677">
    <property type="term" value="F:DNA binding"/>
    <property type="evidence" value="ECO:0007669"/>
    <property type="project" value="UniProtKB-UniRule"/>
</dbReference>
<dbReference type="GO" id="GO:0070063">
    <property type="term" value="F:RNA polymerase binding"/>
    <property type="evidence" value="ECO:0007669"/>
    <property type="project" value="InterPro"/>
</dbReference>
<dbReference type="GO" id="GO:0006354">
    <property type="term" value="P:DNA-templated transcription elongation"/>
    <property type="evidence" value="ECO:0007669"/>
    <property type="project" value="TreeGrafter"/>
</dbReference>
<dbReference type="GO" id="GO:0032784">
    <property type="term" value="P:regulation of DNA-templated transcription elongation"/>
    <property type="evidence" value="ECO:0007669"/>
    <property type="project" value="UniProtKB-UniRule"/>
</dbReference>
<dbReference type="FunFam" id="1.10.287.180:FF:000001">
    <property type="entry name" value="Transcription elongation factor GreA"/>
    <property type="match status" value="1"/>
</dbReference>
<dbReference type="FunFam" id="3.10.50.30:FF:000001">
    <property type="entry name" value="Transcription elongation factor GreA"/>
    <property type="match status" value="1"/>
</dbReference>
<dbReference type="Gene3D" id="3.10.50.30">
    <property type="entry name" value="Transcription elongation factor, GreA/GreB, C-terminal domain"/>
    <property type="match status" value="1"/>
</dbReference>
<dbReference type="Gene3D" id="1.10.287.180">
    <property type="entry name" value="Transcription elongation factor, GreA/GreB, N-terminal domain"/>
    <property type="match status" value="1"/>
</dbReference>
<dbReference type="HAMAP" id="MF_00105">
    <property type="entry name" value="GreA_GreB"/>
    <property type="match status" value="1"/>
</dbReference>
<dbReference type="InterPro" id="IPR036953">
    <property type="entry name" value="GreA/GreB_C_sf"/>
</dbReference>
<dbReference type="InterPro" id="IPR018151">
    <property type="entry name" value="TF_GreA/GreB_CS"/>
</dbReference>
<dbReference type="InterPro" id="IPR006359">
    <property type="entry name" value="Tscrpt_elong_fac_GreA"/>
</dbReference>
<dbReference type="InterPro" id="IPR028624">
    <property type="entry name" value="Tscrpt_elong_fac_GreA/B"/>
</dbReference>
<dbReference type="InterPro" id="IPR001437">
    <property type="entry name" value="Tscrpt_elong_fac_GreA/B_C"/>
</dbReference>
<dbReference type="InterPro" id="IPR023459">
    <property type="entry name" value="Tscrpt_elong_fac_GreA/B_fam"/>
</dbReference>
<dbReference type="InterPro" id="IPR022691">
    <property type="entry name" value="Tscrpt_elong_fac_GreA/B_N"/>
</dbReference>
<dbReference type="InterPro" id="IPR036805">
    <property type="entry name" value="Tscrpt_elong_fac_GreA/B_N_sf"/>
</dbReference>
<dbReference type="NCBIfam" id="TIGR01462">
    <property type="entry name" value="greA"/>
    <property type="match status" value="1"/>
</dbReference>
<dbReference type="NCBIfam" id="NF001261">
    <property type="entry name" value="PRK00226.1-2"/>
    <property type="match status" value="1"/>
</dbReference>
<dbReference type="NCBIfam" id="NF001263">
    <property type="entry name" value="PRK00226.1-4"/>
    <property type="match status" value="1"/>
</dbReference>
<dbReference type="NCBIfam" id="NF001264">
    <property type="entry name" value="PRK00226.1-5"/>
    <property type="match status" value="1"/>
</dbReference>
<dbReference type="PANTHER" id="PTHR30437">
    <property type="entry name" value="TRANSCRIPTION ELONGATION FACTOR GREA"/>
    <property type="match status" value="1"/>
</dbReference>
<dbReference type="PANTHER" id="PTHR30437:SF4">
    <property type="entry name" value="TRANSCRIPTION ELONGATION FACTOR GREA"/>
    <property type="match status" value="1"/>
</dbReference>
<dbReference type="Pfam" id="PF01272">
    <property type="entry name" value="GreA_GreB"/>
    <property type="match status" value="1"/>
</dbReference>
<dbReference type="Pfam" id="PF03449">
    <property type="entry name" value="GreA_GreB_N"/>
    <property type="match status" value="1"/>
</dbReference>
<dbReference type="PIRSF" id="PIRSF006092">
    <property type="entry name" value="GreA_GreB"/>
    <property type="match status" value="1"/>
</dbReference>
<dbReference type="SUPFAM" id="SSF54534">
    <property type="entry name" value="FKBP-like"/>
    <property type="match status" value="1"/>
</dbReference>
<dbReference type="SUPFAM" id="SSF46557">
    <property type="entry name" value="GreA transcript cleavage protein, N-terminal domain"/>
    <property type="match status" value="1"/>
</dbReference>
<dbReference type="PROSITE" id="PS00829">
    <property type="entry name" value="GREAB_1"/>
    <property type="match status" value="1"/>
</dbReference>
<dbReference type="PROSITE" id="PS00830">
    <property type="entry name" value="GREAB_2"/>
    <property type="match status" value="1"/>
</dbReference>
<comment type="function">
    <text evidence="1">Necessary for efficient RNA polymerase transcription elongation past template-encoded arresting sites. The arresting sites in DNA have the property of trapping a certain fraction of elongating RNA polymerases that pass through, resulting in locked ternary complexes. Cleavage of the nascent transcript by cleavage factors such as GreA or GreB allows the resumption of elongation from the new 3'terminus. GreA releases sequences of 2 to 3 nucleotides.</text>
</comment>
<comment type="similarity">
    <text evidence="1">Belongs to the GreA/GreB family.</text>
</comment>
<feature type="chain" id="PRO_1000094211" description="Transcription elongation factor GreA">
    <location>
        <begin position="1"/>
        <end position="158"/>
    </location>
</feature>
<reference key="1">
    <citation type="journal article" date="2010" name="J. Bacteriol.">
        <title>Genome sequence of the deep-rooted Yersinia pestis strain Angola reveals new insights into the evolution and pangenome of the plague bacterium.</title>
        <authorList>
            <person name="Eppinger M."/>
            <person name="Worsham P.L."/>
            <person name="Nikolich M.P."/>
            <person name="Riley D.R."/>
            <person name="Sebastian Y."/>
            <person name="Mou S."/>
            <person name="Achtman M."/>
            <person name="Lindler L.E."/>
            <person name="Ravel J."/>
        </authorList>
    </citation>
    <scope>NUCLEOTIDE SEQUENCE [LARGE SCALE GENOMIC DNA]</scope>
    <source>
        <strain>Angola</strain>
    </source>
</reference>
<keyword id="KW-0238">DNA-binding</keyword>
<keyword id="KW-0804">Transcription</keyword>
<keyword id="KW-0805">Transcription regulation</keyword>
<organism>
    <name type="scientific">Yersinia pestis bv. Antiqua (strain Angola)</name>
    <dbReference type="NCBI Taxonomy" id="349746"/>
    <lineage>
        <taxon>Bacteria</taxon>
        <taxon>Pseudomonadati</taxon>
        <taxon>Pseudomonadota</taxon>
        <taxon>Gammaproteobacteria</taxon>
        <taxon>Enterobacterales</taxon>
        <taxon>Yersiniaceae</taxon>
        <taxon>Yersinia</taxon>
    </lineage>
</organism>
<gene>
    <name evidence="1" type="primary">greA</name>
    <name type="ordered locus">YpAngola_A3982</name>
</gene>
<sequence>MKQIPMTVRGADKLREELDYLKGVRRPKIISDIADAREHGDLKENAEYHAAREQQGFCEGRIQEIEAKLSNAQVIDITKMPNNGRVIFGATVRVLNLNTEEEQNYRIVGDDEADFKQNLISVNSPIARGLIGKEVDDVVVIHTPGGEVEYEILSVEYV</sequence>
<accession>A9R594</accession>
<proteinExistence type="inferred from homology"/>